<name>YSH1_EMENI</name>
<sequence>MAAKRKAAAMNAVDDEPVDPSDELAFYCLGGGNEVGRSCHIIQYKGKTVMLDAGMHPAKEGFSALPFFDEFDLSTVDILLISHFHVDHSSALPYVLSKTNFKGRVFMTHATKAIYKWLIQDNVRVNNTASSSDQRTTLYTEHDHLSTLPLIETIDFNTTHTINSIRITPYPAGHVLGAAMFLISIAGLNILFTGDYSREEDRHLIPATVPRGVKIDVLITESTFGISSNPPRLEREAALMKSITGVLNRGGRVLMPVFALGRAQELLLILEEYWETHPELQKIPIYYIGNTARRCMVVYQTYIGAMNDNIKRLFRQRMAEAEASGDKSVSAGPWDFKYVRSLRSLERFDDVGGCVMLASPGMLQTGTSRELLERWAPNERNGVVMTGYSVEGTMAKQLLNEPDQIHAVMSRAATGMGRTRMNGNDEEQKIMIPRRCTVDEISFAAHVDGVENRNFIEEVSAPVVILVHGEKHQMMRLKSKLLSLNAEKTVKVKVYTPANCEEVRIPFRKDKIAKVVGKLAQTTLPTDNEDGDGPLMAGVLVQNGFDLSLMAPDDLREYAGLATTTITCKQHITLSSASMDLIKWALEGTFGAIEEIGTDEDAEKEDQQSESEEKQRMKEEADEEIPMEKPQAYLVMGCVVIRYHPRTREVELQWEGNMMNDGIADAVMAVLLTVESSPASVKQSAKHNKHHHHHHHDETDTLKFLNPHAAQDAEERFARLLMMLEAQFGSDIAPIERPRVPSSTESATTTTNGNGNSKSDSEQLSSLESKTDGATPQDPDTLSELEAAELSRLHALGIPVPGIEIKVDKHVARVWLEDLEVECANAVLRDRVRVVIERAVETVASMWSVGRSSKTITNGGGKEIAGTGADDVASKPGLEVAARA</sequence>
<dbReference type="EC" id="3.1.27.-"/>
<dbReference type="EMBL" id="AACD01000015">
    <property type="protein sequence ID" value="EAA65558.1"/>
    <property type="molecule type" value="Genomic_DNA"/>
</dbReference>
<dbReference type="EMBL" id="BN001308">
    <property type="protein sequence ID" value="CBF88384.1"/>
    <property type="molecule type" value="Genomic_DNA"/>
</dbReference>
<dbReference type="RefSeq" id="XP_658594.1">
    <property type="nucleotide sequence ID" value="XM_653502.1"/>
</dbReference>
<dbReference type="SMR" id="Q5BEP0"/>
<dbReference type="FunCoup" id="Q5BEP0">
    <property type="interactions" value="933"/>
</dbReference>
<dbReference type="STRING" id="227321.Q5BEP0"/>
<dbReference type="EnsemblFungi" id="CBF88384">
    <property type="protein sequence ID" value="CBF88384"/>
    <property type="gene ID" value="ANIA_00990"/>
</dbReference>
<dbReference type="KEGG" id="ani:ANIA_00990"/>
<dbReference type="VEuPathDB" id="FungiDB:AN0990"/>
<dbReference type="eggNOG" id="KOG1137">
    <property type="taxonomic scope" value="Eukaryota"/>
</dbReference>
<dbReference type="HOGENOM" id="CLU_009673_2_1_1"/>
<dbReference type="InParanoid" id="Q5BEP0"/>
<dbReference type="OMA" id="CKQHITL"/>
<dbReference type="OrthoDB" id="10249535at2759"/>
<dbReference type="Proteomes" id="UP000000560">
    <property type="component" value="Chromosome VIII"/>
</dbReference>
<dbReference type="GO" id="GO:0005847">
    <property type="term" value="C:mRNA cleavage and polyadenylation specificity factor complex"/>
    <property type="evidence" value="ECO:0000318"/>
    <property type="project" value="GO_Central"/>
</dbReference>
<dbReference type="GO" id="GO:0004534">
    <property type="term" value="F:5'-3' RNA exonuclease activity"/>
    <property type="evidence" value="ECO:0000318"/>
    <property type="project" value="GO_Central"/>
</dbReference>
<dbReference type="GO" id="GO:0046872">
    <property type="term" value="F:metal ion binding"/>
    <property type="evidence" value="ECO:0007669"/>
    <property type="project" value="UniProtKB-KW"/>
</dbReference>
<dbReference type="GO" id="GO:0003723">
    <property type="term" value="F:RNA binding"/>
    <property type="evidence" value="ECO:0000318"/>
    <property type="project" value="GO_Central"/>
</dbReference>
<dbReference type="GO" id="GO:0004521">
    <property type="term" value="F:RNA endonuclease activity"/>
    <property type="evidence" value="ECO:0000318"/>
    <property type="project" value="GO_Central"/>
</dbReference>
<dbReference type="GO" id="GO:0006397">
    <property type="term" value="P:mRNA processing"/>
    <property type="evidence" value="ECO:0007669"/>
    <property type="project" value="UniProtKB-KW"/>
</dbReference>
<dbReference type="GO" id="GO:0044550">
    <property type="term" value="P:secondary metabolite biosynthetic process"/>
    <property type="evidence" value="ECO:0007669"/>
    <property type="project" value="UniProtKB-ARBA"/>
</dbReference>
<dbReference type="CDD" id="cd16292">
    <property type="entry name" value="CPSF3-like_MBL-fold"/>
    <property type="match status" value="1"/>
</dbReference>
<dbReference type="FunFam" id="3.60.15.10:FF:000001">
    <property type="entry name" value="Cleavage and polyadenylation specificity factor"/>
    <property type="match status" value="1"/>
</dbReference>
<dbReference type="FunFam" id="3.40.50.10890:FF:000004">
    <property type="entry name" value="Cleavage and polyadenylation specifity factor"/>
    <property type="match status" value="1"/>
</dbReference>
<dbReference type="Gene3D" id="3.40.50.10890">
    <property type="match status" value="1"/>
</dbReference>
<dbReference type="Gene3D" id="3.60.15.10">
    <property type="entry name" value="Ribonuclease Z/Hydroxyacylglutathione hydrolase-like"/>
    <property type="match status" value="1"/>
</dbReference>
<dbReference type="InterPro" id="IPR022712">
    <property type="entry name" value="Beta_Casp"/>
</dbReference>
<dbReference type="InterPro" id="IPR021718">
    <property type="entry name" value="CPSF73-100_C"/>
</dbReference>
<dbReference type="InterPro" id="IPR050698">
    <property type="entry name" value="MBL"/>
</dbReference>
<dbReference type="InterPro" id="IPR001279">
    <property type="entry name" value="Metallo-B-lactamas"/>
</dbReference>
<dbReference type="InterPro" id="IPR036866">
    <property type="entry name" value="RibonucZ/Hydroxyglut_hydro"/>
</dbReference>
<dbReference type="InterPro" id="IPR011108">
    <property type="entry name" value="RMMBL"/>
</dbReference>
<dbReference type="PANTHER" id="PTHR11203">
    <property type="entry name" value="CLEAVAGE AND POLYADENYLATION SPECIFICITY FACTOR FAMILY MEMBER"/>
    <property type="match status" value="1"/>
</dbReference>
<dbReference type="PANTHER" id="PTHR11203:SF11">
    <property type="entry name" value="CLEAVAGE AND POLYADENYLATION SPECIFICITY FACTOR SUBUNIT 3"/>
    <property type="match status" value="1"/>
</dbReference>
<dbReference type="Pfam" id="PF10996">
    <property type="entry name" value="Beta-Casp"/>
    <property type="match status" value="1"/>
</dbReference>
<dbReference type="Pfam" id="PF11718">
    <property type="entry name" value="CPSF73-100_C"/>
    <property type="match status" value="1"/>
</dbReference>
<dbReference type="Pfam" id="PF00753">
    <property type="entry name" value="Lactamase_B"/>
    <property type="match status" value="1"/>
</dbReference>
<dbReference type="Pfam" id="PF07521">
    <property type="entry name" value="RMMBL"/>
    <property type="match status" value="1"/>
</dbReference>
<dbReference type="SMART" id="SM01027">
    <property type="entry name" value="Beta-Casp"/>
    <property type="match status" value="1"/>
</dbReference>
<dbReference type="SMART" id="SM01098">
    <property type="entry name" value="CPSF73-100_C"/>
    <property type="match status" value="1"/>
</dbReference>
<dbReference type="SMART" id="SM00849">
    <property type="entry name" value="Lactamase_B"/>
    <property type="match status" value="1"/>
</dbReference>
<dbReference type="SUPFAM" id="SSF56281">
    <property type="entry name" value="Metallo-hydrolase/oxidoreductase"/>
    <property type="match status" value="1"/>
</dbReference>
<proteinExistence type="inferred from homology"/>
<feature type="chain" id="PRO_0000238902" description="Endoribonuclease ysh1">
    <location>
        <begin position="1"/>
        <end position="884"/>
    </location>
</feature>
<feature type="region of interest" description="Disordered" evidence="3">
    <location>
        <begin position="595"/>
        <end position="626"/>
    </location>
</feature>
<feature type="region of interest" description="Disordered" evidence="3">
    <location>
        <begin position="678"/>
        <end position="705"/>
    </location>
</feature>
<feature type="region of interest" description="Disordered" evidence="3">
    <location>
        <begin position="734"/>
        <end position="780"/>
    </location>
</feature>
<feature type="compositionally biased region" description="Basic and acidic residues" evidence="3">
    <location>
        <begin position="605"/>
        <end position="619"/>
    </location>
</feature>
<feature type="compositionally biased region" description="Basic residues" evidence="3">
    <location>
        <begin position="684"/>
        <end position="695"/>
    </location>
</feature>
<feature type="compositionally biased region" description="Low complexity" evidence="3">
    <location>
        <begin position="742"/>
        <end position="758"/>
    </location>
</feature>
<feature type="compositionally biased region" description="Polar residues" evidence="3">
    <location>
        <begin position="762"/>
        <end position="780"/>
    </location>
</feature>
<feature type="active site" description="Proton donor" evidence="2">
    <location>
        <position position="446"/>
    </location>
</feature>
<feature type="binding site" evidence="1">
    <location>
        <position position="83"/>
    </location>
    <ligand>
        <name>Zn(2+)</name>
        <dbReference type="ChEBI" id="CHEBI:29105"/>
        <label>1</label>
    </ligand>
</feature>
<feature type="binding site" evidence="1">
    <location>
        <position position="85"/>
    </location>
    <ligand>
        <name>Zn(2+)</name>
        <dbReference type="ChEBI" id="CHEBI:29105"/>
        <label>1</label>
    </ligand>
</feature>
<feature type="binding site" evidence="1">
    <location>
        <position position="87"/>
    </location>
    <ligand>
        <name>Zn(2+)</name>
        <dbReference type="ChEBI" id="CHEBI:29105"/>
        <label>2</label>
    </ligand>
</feature>
<feature type="binding site" evidence="1">
    <location>
        <position position="88"/>
    </location>
    <ligand>
        <name>Zn(2+)</name>
        <dbReference type="ChEBI" id="CHEBI:29105"/>
        <label>2</label>
    </ligand>
</feature>
<feature type="binding site" evidence="1">
    <location>
        <position position="174"/>
    </location>
    <ligand>
        <name>Zn(2+)</name>
        <dbReference type="ChEBI" id="CHEBI:29105"/>
        <label>1</label>
    </ligand>
</feature>
<feature type="binding site" evidence="1">
    <location>
        <position position="195"/>
    </location>
    <ligand>
        <name>Zn(2+)</name>
        <dbReference type="ChEBI" id="CHEBI:29105"/>
        <label>1</label>
    </ligand>
</feature>
<feature type="binding site" evidence="1">
    <location>
        <position position="195"/>
    </location>
    <ligand>
        <name>Zn(2+)</name>
        <dbReference type="ChEBI" id="CHEBI:29105"/>
        <label>2</label>
    </ligand>
</feature>
<feature type="binding site" evidence="1">
    <location>
        <position position="468"/>
    </location>
    <ligand>
        <name>Zn(2+)</name>
        <dbReference type="ChEBI" id="CHEBI:29105"/>
        <label>2</label>
    </ligand>
</feature>
<organism>
    <name type="scientific">Emericella nidulans (strain FGSC A4 / ATCC 38163 / CBS 112.46 / NRRL 194 / M139)</name>
    <name type="common">Aspergillus nidulans</name>
    <dbReference type="NCBI Taxonomy" id="227321"/>
    <lineage>
        <taxon>Eukaryota</taxon>
        <taxon>Fungi</taxon>
        <taxon>Dikarya</taxon>
        <taxon>Ascomycota</taxon>
        <taxon>Pezizomycotina</taxon>
        <taxon>Eurotiomycetes</taxon>
        <taxon>Eurotiomycetidae</taxon>
        <taxon>Eurotiales</taxon>
        <taxon>Aspergillaceae</taxon>
        <taxon>Aspergillus</taxon>
        <taxon>Aspergillus subgen. Nidulantes</taxon>
    </lineage>
</organism>
<evidence type="ECO:0000250" key="1"/>
<evidence type="ECO:0000255" key="2"/>
<evidence type="ECO:0000256" key="3">
    <source>
        <dbReference type="SAM" id="MobiDB-lite"/>
    </source>
</evidence>
<evidence type="ECO:0000305" key="4"/>
<accession>Q5BEP0</accession>
<accession>C8VU78</accession>
<comment type="function">
    <text evidence="1">Component of the cleavage factor I (CF I) involved in pre-mRNA 3'-end processing.</text>
</comment>
<comment type="subcellular location">
    <subcellularLocation>
        <location evidence="1">Nucleus</location>
    </subcellularLocation>
</comment>
<comment type="similarity">
    <text evidence="4">Belongs to the metallo-beta-lactamase superfamily. RNA-metabolizing metallo-beta-lactamase-like family. CPSF2/YSH1 subfamily.</text>
</comment>
<reference key="1">
    <citation type="journal article" date="2005" name="Nature">
        <title>Sequencing of Aspergillus nidulans and comparative analysis with A. fumigatus and A. oryzae.</title>
        <authorList>
            <person name="Galagan J.E."/>
            <person name="Calvo S.E."/>
            <person name="Cuomo C."/>
            <person name="Ma L.-J."/>
            <person name="Wortman J.R."/>
            <person name="Batzoglou S."/>
            <person name="Lee S.-I."/>
            <person name="Bastuerkmen M."/>
            <person name="Spevak C.C."/>
            <person name="Clutterbuck J."/>
            <person name="Kapitonov V."/>
            <person name="Jurka J."/>
            <person name="Scazzocchio C."/>
            <person name="Farman M.L."/>
            <person name="Butler J."/>
            <person name="Purcell S."/>
            <person name="Harris S."/>
            <person name="Braus G.H."/>
            <person name="Draht O."/>
            <person name="Busch S."/>
            <person name="D'Enfert C."/>
            <person name="Bouchier C."/>
            <person name="Goldman G.H."/>
            <person name="Bell-Pedersen D."/>
            <person name="Griffiths-Jones S."/>
            <person name="Doonan J.H."/>
            <person name="Yu J."/>
            <person name="Vienken K."/>
            <person name="Pain A."/>
            <person name="Freitag M."/>
            <person name="Selker E.U."/>
            <person name="Archer D.B."/>
            <person name="Penalva M.A."/>
            <person name="Oakley B.R."/>
            <person name="Momany M."/>
            <person name="Tanaka T."/>
            <person name="Kumagai T."/>
            <person name="Asai K."/>
            <person name="Machida M."/>
            <person name="Nierman W.C."/>
            <person name="Denning D.W."/>
            <person name="Caddick M.X."/>
            <person name="Hynes M."/>
            <person name="Paoletti M."/>
            <person name="Fischer R."/>
            <person name="Miller B.L."/>
            <person name="Dyer P.S."/>
            <person name="Sachs M.S."/>
            <person name="Osmani S.A."/>
            <person name="Birren B.W."/>
        </authorList>
    </citation>
    <scope>NUCLEOTIDE SEQUENCE [LARGE SCALE GENOMIC DNA]</scope>
    <source>
        <strain>FGSC A4 / ATCC 38163 / CBS 112.46 / NRRL 194 / M139</strain>
    </source>
</reference>
<reference key="2">
    <citation type="journal article" date="2009" name="Fungal Genet. Biol.">
        <title>The 2008 update of the Aspergillus nidulans genome annotation: a community effort.</title>
        <authorList>
            <person name="Wortman J.R."/>
            <person name="Gilsenan J.M."/>
            <person name="Joardar V."/>
            <person name="Deegan J."/>
            <person name="Clutterbuck J."/>
            <person name="Andersen M.R."/>
            <person name="Archer D."/>
            <person name="Bencina M."/>
            <person name="Braus G."/>
            <person name="Coutinho P."/>
            <person name="von Dohren H."/>
            <person name="Doonan J."/>
            <person name="Driessen A.J."/>
            <person name="Durek P."/>
            <person name="Espeso E."/>
            <person name="Fekete E."/>
            <person name="Flipphi M."/>
            <person name="Estrada C.G."/>
            <person name="Geysens S."/>
            <person name="Goldman G."/>
            <person name="de Groot P.W."/>
            <person name="Hansen K."/>
            <person name="Harris S.D."/>
            <person name="Heinekamp T."/>
            <person name="Helmstaedt K."/>
            <person name="Henrissat B."/>
            <person name="Hofmann G."/>
            <person name="Homan T."/>
            <person name="Horio T."/>
            <person name="Horiuchi H."/>
            <person name="James S."/>
            <person name="Jones M."/>
            <person name="Karaffa L."/>
            <person name="Karanyi Z."/>
            <person name="Kato M."/>
            <person name="Keller N."/>
            <person name="Kelly D.E."/>
            <person name="Kiel J.A."/>
            <person name="Kim J.M."/>
            <person name="van der Klei I.J."/>
            <person name="Klis F.M."/>
            <person name="Kovalchuk A."/>
            <person name="Krasevec N."/>
            <person name="Kubicek C.P."/>
            <person name="Liu B."/>
            <person name="Maccabe A."/>
            <person name="Meyer V."/>
            <person name="Mirabito P."/>
            <person name="Miskei M."/>
            <person name="Mos M."/>
            <person name="Mullins J."/>
            <person name="Nelson D.R."/>
            <person name="Nielsen J."/>
            <person name="Oakley B.R."/>
            <person name="Osmani S.A."/>
            <person name="Pakula T."/>
            <person name="Paszewski A."/>
            <person name="Paulsen I."/>
            <person name="Pilsyk S."/>
            <person name="Pocsi I."/>
            <person name="Punt P.J."/>
            <person name="Ram A.F."/>
            <person name="Ren Q."/>
            <person name="Robellet X."/>
            <person name="Robson G."/>
            <person name="Seiboth B."/>
            <person name="van Solingen P."/>
            <person name="Specht T."/>
            <person name="Sun J."/>
            <person name="Taheri-Talesh N."/>
            <person name="Takeshita N."/>
            <person name="Ussery D."/>
            <person name="vanKuyk P.A."/>
            <person name="Visser H."/>
            <person name="van de Vondervoort P.J."/>
            <person name="de Vries R.P."/>
            <person name="Walton J."/>
            <person name="Xiang X."/>
            <person name="Xiong Y."/>
            <person name="Zeng A.P."/>
            <person name="Brandt B.W."/>
            <person name="Cornell M.J."/>
            <person name="van den Hondel C.A."/>
            <person name="Visser J."/>
            <person name="Oliver S.G."/>
            <person name="Turner G."/>
        </authorList>
    </citation>
    <scope>GENOME REANNOTATION</scope>
    <source>
        <strain>FGSC A4 / ATCC 38163 / CBS 112.46 / NRRL 194 / M139</strain>
    </source>
</reference>
<keyword id="KW-0255">Endonuclease</keyword>
<keyword id="KW-0378">Hydrolase</keyword>
<keyword id="KW-0479">Metal-binding</keyword>
<keyword id="KW-0507">mRNA processing</keyword>
<keyword id="KW-0540">Nuclease</keyword>
<keyword id="KW-0539">Nucleus</keyword>
<keyword id="KW-1185">Reference proteome</keyword>
<keyword id="KW-0862">Zinc</keyword>
<gene>
    <name type="primary">ysh1</name>
    <name type="ORF">AN0990</name>
</gene>
<protein>
    <recommendedName>
        <fullName>Endoribonuclease ysh1</fullName>
        <ecNumber>3.1.27.-</ecNumber>
    </recommendedName>
    <alternativeName>
        <fullName>mRNA 3'-end-processing protein ysh1</fullName>
    </alternativeName>
</protein>